<comment type="function">
    <text evidence="1">Catalyzes the transfer of the diacylglyceryl group from phosphatidylglycerol to the sulfhydryl group of the N-terminal cysteine of a prolipoprotein, the first step in the formation of mature lipoproteins.</text>
</comment>
<comment type="catalytic activity">
    <reaction evidence="1">
        <text>L-cysteinyl-[prolipoprotein] + a 1,2-diacyl-sn-glycero-3-phospho-(1'-sn-glycerol) = an S-1,2-diacyl-sn-glyceryl-L-cysteinyl-[prolipoprotein] + sn-glycerol 1-phosphate + H(+)</text>
        <dbReference type="Rhea" id="RHEA:56712"/>
        <dbReference type="Rhea" id="RHEA-COMP:14679"/>
        <dbReference type="Rhea" id="RHEA-COMP:14680"/>
        <dbReference type="ChEBI" id="CHEBI:15378"/>
        <dbReference type="ChEBI" id="CHEBI:29950"/>
        <dbReference type="ChEBI" id="CHEBI:57685"/>
        <dbReference type="ChEBI" id="CHEBI:64716"/>
        <dbReference type="ChEBI" id="CHEBI:140658"/>
        <dbReference type="EC" id="2.5.1.145"/>
    </reaction>
</comment>
<comment type="pathway">
    <text evidence="1">Protein modification; lipoprotein biosynthesis (diacylglyceryl transfer).</text>
</comment>
<comment type="subcellular location">
    <subcellularLocation>
        <location evidence="1">Cell inner membrane</location>
        <topology evidence="1">Multi-pass membrane protein</topology>
    </subcellularLocation>
</comment>
<comment type="similarity">
    <text evidence="1">Belongs to the Lgt family.</text>
</comment>
<reference key="1">
    <citation type="journal article" date="2011" name="J. Bacteriol.">
        <title>Comparative genomics of 28 Salmonella enterica isolates: evidence for CRISPR-mediated adaptive sublineage evolution.</title>
        <authorList>
            <person name="Fricke W.F."/>
            <person name="Mammel M.K."/>
            <person name="McDermott P.F."/>
            <person name="Tartera C."/>
            <person name="White D.G."/>
            <person name="Leclerc J.E."/>
            <person name="Ravel J."/>
            <person name="Cebula T.A."/>
        </authorList>
    </citation>
    <scope>NUCLEOTIDE SEQUENCE [LARGE SCALE GENOMIC DNA]</scope>
    <source>
        <strain>SL476</strain>
    </source>
</reference>
<sequence length="291" mass="33075">MTSSYLHFPDFDPVIFSIGPVALHWYGLMYLVGFVFAMWLAVRRANRPGSGWTKNEVENLLYAGFLGVFLGGRIGYVLFYNFPLFLDNPLYLFRVWDGGMSFHGGLIGVILVMIIFARRTKRSFFQVSDFIAPLIPFGLGAGRLGNFINGELWGRVDPDFRFAMLFPGSRAEDIALLPSHPQWQPIFDTYGVLPRHPSQLYELALEGVVLFIILNLFIRKPRPMGAVSGLFLIGYGAFRIIVEFFRQPDAQFTGAWVQYISMGQILSIPMIIAGAIMMVWAYRRRPQQHVS</sequence>
<dbReference type="EC" id="2.5.1.145" evidence="1"/>
<dbReference type="EMBL" id="CP001120">
    <property type="protein sequence ID" value="ACF68250.1"/>
    <property type="molecule type" value="Genomic_DNA"/>
</dbReference>
<dbReference type="RefSeq" id="WP_000204645.1">
    <property type="nucleotide sequence ID" value="NC_011083.1"/>
</dbReference>
<dbReference type="SMR" id="B4TGQ7"/>
<dbReference type="KEGG" id="seh:SeHA_C3215"/>
<dbReference type="HOGENOM" id="CLU_013386_1_0_6"/>
<dbReference type="UniPathway" id="UPA00664"/>
<dbReference type="Proteomes" id="UP000001866">
    <property type="component" value="Chromosome"/>
</dbReference>
<dbReference type="GO" id="GO:0005886">
    <property type="term" value="C:plasma membrane"/>
    <property type="evidence" value="ECO:0007669"/>
    <property type="project" value="UniProtKB-SubCell"/>
</dbReference>
<dbReference type="GO" id="GO:0008961">
    <property type="term" value="F:phosphatidylglycerol-prolipoprotein diacylglyceryl transferase activity"/>
    <property type="evidence" value="ECO:0007669"/>
    <property type="project" value="UniProtKB-UniRule"/>
</dbReference>
<dbReference type="GO" id="GO:0042158">
    <property type="term" value="P:lipoprotein biosynthetic process"/>
    <property type="evidence" value="ECO:0007669"/>
    <property type="project" value="UniProtKB-UniRule"/>
</dbReference>
<dbReference type="HAMAP" id="MF_01147">
    <property type="entry name" value="Lgt"/>
    <property type="match status" value="1"/>
</dbReference>
<dbReference type="InterPro" id="IPR001640">
    <property type="entry name" value="Lgt"/>
</dbReference>
<dbReference type="NCBIfam" id="TIGR00544">
    <property type="entry name" value="lgt"/>
    <property type="match status" value="1"/>
</dbReference>
<dbReference type="PANTHER" id="PTHR30589:SF0">
    <property type="entry name" value="PHOSPHATIDYLGLYCEROL--PROLIPOPROTEIN DIACYLGLYCERYL TRANSFERASE"/>
    <property type="match status" value="1"/>
</dbReference>
<dbReference type="PANTHER" id="PTHR30589">
    <property type="entry name" value="PROLIPOPROTEIN DIACYLGLYCERYL TRANSFERASE"/>
    <property type="match status" value="1"/>
</dbReference>
<dbReference type="Pfam" id="PF01790">
    <property type="entry name" value="LGT"/>
    <property type="match status" value="1"/>
</dbReference>
<dbReference type="PROSITE" id="PS01311">
    <property type="entry name" value="LGT"/>
    <property type="match status" value="1"/>
</dbReference>
<name>LGT_SALHS</name>
<feature type="chain" id="PRO_1000137455" description="Phosphatidylglycerol--prolipoprotein diacylglyceryl transferase">
    <location>
        <begin position="1"/>
        <end position="291"/>
    </location>
</feature>
<feature type="transmembrane region" description="Helical" evidence="1">
    <location>
        <begin position="21"/>
        <end position="41"/>
    </location>
</feature>
<feature type="transmembrane region" description="Helical" evidence="1">
    <location>
        <begin position="60"/>
        <end position="80"/>
    </location>
</feature>
<feature type="transmembrane region" description="Helical" evidence="1">
    <location>
        <begin position="96"/>
        <end position="116"/>
    </location>
</feature>
<feature type="transmembrane region" description="Helical" evidence="1">
    <location>
        <begin position="130"/>
        <end position="150"/>
    </location>
</feature>
<feature type="transmembrane region" description="Helical" evidence="1">
    <location>
        <begin position="198"/>
        <end position="218"/>
    </location>
</feature>
<feature type="transmembrane region" description="Helical" evidence="1">
    <location>
        <begin position="225"/>
        <end position="245"/>
    </location>
</feature>
<feature type="transmembrane region" description="Helical" evidence="1">
    <location>
        <begin position="260"/>
        <end position="280"/>
    </location>
</feature>
<feature type="binding site" evidence="1">
    <location>
        <position position="143"/>
    </location>
    <ligand>
        <name>a 1,2-diacyl-sn-glycero-3-phospho-(1'-sn-glycerol)</name>
        <dbReference type="ChEBI" id="CHEBI:64716"/>
    </ligand>
</feature>
<organism>
    <name type="scientific">Salmonella heidelberg (strain SL476)</name>
    <dbReference type="NCBI Taxonomy" id="454169"/>
    <lineage>
        <taxon>Bacteria</taxon>
        <taxon>Pseudomonadati</taxon>
        <taxon>Pseudomonadota</taxon>
        <taxon>Gammaproteobacteria</taxon>
        <taxon>Enterobacterales</taxon>
        <taxon>Enterobacteriaceae</taxon>
        <taxon>Salmonella</taxon>
    </lineage>
</organism>
<accession>B4TGQ7</accession>
<keyword id="KW-0997">Cell inner membrane</keyword>
<keyword id="KW-1003">Cell membrane</keyword>
<keyword id="KW-0472">Membrane</keyword>
<keyword id="KW-0808">Transferase</keyword>
<keyword id="KW-0812">Transmembrane</keyword>
<keyword id="KW-1133">Transmembrane helix</keyword>
<evidence type="ECO:0000255" key="1">
    <source>
        <dbReference type="HAMAP-Rule" id="MF_01147"/>
    </source>
</evidence>
<protein>
    <recommendedName>
        <fullName evidence="1">Phosphatidylglycerol--prolipoprotein diacylglyceryl transferase</fullName>
        <ecNumber evidence="1">2.5.1.145</ecNumber>
    </recommendedName>
</protein>
<proteinExistence type="inferred from homology"/>
<gene>
    <name evidence="1" type="primary">lgt</name>
    <name type="ordered locus">SeHA_C3215</name>
</gene>